<accession>Q8EHR7</accession>
<dbReference type="EC" id="5.3.1.6" evidence="1"/>
<dbReference type="EMBL" id="AE014299">
    <property type="protein sequence ID" value="AAN54220.1"/>
    <property type="molecule type" value="Genomic_DNA"/>
</dbReference>
<dbReference type="RefSeq" id="NP_716775.1">
    <property type="nucleotide sequence ID" value="NC_004347.2"/>
</dbReference>
<dbReference type="RefSeq" id="WP_011071382.1">
    <property type="nucleotide sequence ID" value="NZ_CP053946.1"/>
</dbReference>
<dbReference type="SMR" id="Q8EHR7"/>
<dbReference type="STRING" id="211586.SO_1150"/>
<dbReference type="PaxDb" id="211586-SO_1150"/>
<dbReference type="KEGG" id="son:SO_1150"/>
<dbReference type="PATRIC" id="fig|211586.12.peg.1103"/>
<dbReference type="eggNOG" id="COG0120">
    <property type="taxonomic scope" value="Bacteria"/>
</dbReference>
<dbReference type="HOGENOM" id="CLU_056590_1_1_6"/>
<dbReference type="OrthoDB" id="5870696at2"/>
<dbReference type="PhylomeDB" id="Q8EHR7"/>
<dbReference type="BioCyc" id="SONE211586:G1GMP-1054-MONOMER"/>
<dbReference type="UniPathway" id="UPA00115">
    <property type="reaction ID" value="UER00412"/>
</dbReference>
<dbReference type="Proteomes" id="UP000008186">
    <property type="component" value="Chromosome"/>
</dbReference>
<dbReference type="GO" id="GO:0005829">
    <property type="term" value="C:cytosol"/>
    <property type="evidence" value="ECO:0000318"/>
    <property type="project" value="GO_Central"/>
</dbReference>
<dbReference type="GO" id="GO:0004751">
    <property type="term" value="F:ribose-5-phosphate isomerase activity"/>
    <property type="evidence" value="ECO:0000318"/>
    <property type="project" value="GO_Central"/>
</dbReference>
<dbReference type="GO" id="GO:0006014">
    <property type="term" value="P:D-ribose metabolic process"/>
    <property type="evidence" value="ECO:0000318"/>
    <property type="project" value="GO_Central"/>
</dbReference>
<dbReference type="GO" id="GO:0009052">
    <property type="term" value="P:pentose-phosphate shunt, non-oxidative branch"/>
    <property type="evidence" value="ECO:0000318"/>
    <property type="project" value="GO_Central"/>
</dbReference>
<dbReference type="CDD" id="cd01398">
    <property type="entry name" value="RPI_A"/>
    <property type="match status" value="1"/>
</dbReference>
<dbReference type="FunFam" id="3.30.70.260:FF:000004">
    <property type="entry name" value="Ribose-5-phosphate isomerase A"/>
    <property type="match status" value="1"/>
</dbReference>
<dbReference type="FunFam" id="3.40.50.1360:FF:000001">
    <property type="entry name" value="Ribose-5-phosphate isomerase A"/>
    <property type="match status" value="1"/>
</dbReference>
<dbReference type="Gene3D" id="3.30.70.260">
    <property type="match status" value="1"/>
</dbReference>
<dbReference type="Gene3D" id="3.40.50.1360">
    <property type="match status" value="1"/>
</dbReference>
<dbReference type="HAMAP" id="MF_00170">
    <property type="entry name" value="Rib_5P_isom_A"/>
    <property type="match status" value="1"/>
</dbReference>
<dbReference type="InterPro" id="IPR037171">
    <property type="entry name" value="NagB/RpiA_transferase-like"/>
</dbReference>
<dbReference type="InterPro" id="IPR020672">
    <property type="entry name" value="Ribose5P_isomerase_typA_subgr"/>
</dbReference>
<dbReference type="InterPro" id="IPR004788">
    <property type="entry name" value="Ribose5P_isomerase_type_A"/>
</dbReference>
<dbReference type="NCBIfam" id="NF001924">
    <property type="entry name" value="PRK00702.1"/>
    <property type="match status" value="1"/>
</dbReference>
<dbReference type="NCBIfam" id="TIGR00021">
    <property type="entry name" value="rpiA"/>
    <property type="match status" value="1"/>
</dbReference>
<dbReference type="PANTHER" id="PTHR11934">
    <property type="entry name" value="RIBOSE-5-PHOSPHATE ISOMERASE"/>
    <property type="match status" value="1"/>
</dbReference>
<dbReference type="PANTHER" id="PTHR11934:SF0">
    <property type="entry name" value="RIBOSE-5-PHOSPHATE ISOMERASE"/>
    <property type="match status" value="1"/>
</dbReference>
<dbReference type="Pfam" id="PF06026">
    <property type="entry name" value="Rib_5-P_isom_A"/>
    <property type="match status" value="1"/>
</dbReference>
<dbReference type="SUPFAM" id="SSF75445">
    <property type="entry name" value="D-ribose-5-phosphate isomerase (RpiA), lid domain"/>
    <property type="match status" value="1"/>
</dbReference>
<dbReference type="SUPFAM" id="SSF100950">
    <property type="entry name" value="NagB/RpiA/CoA transferase-like"/>
    <property type="match status" value="1"/>
</dbReference>
<organism>
    <name type="scientific">Shewanella oneidensis (strain ATCC 700550 / JCM 31522 / CIP 106686 / LMG 19005 / NCIMB 14063 / MR-1)</name>
    <dbReference type="NCBI Taxonomy" id="211586"/>
    <lineage>
        <taxon>Bacteria</taxon>
        <taxon>Pseudomonadati</taxon>
        <taxon>Pseudomonadota</taxon>
        <taxon>Gammaproteobacteria</taxon>
        <taxon>Alteromonadales</taxon>
        <taxon>Shewanellaceae</taxon>
        <taxon>Shewanella</taxon>
    </lineage>
</organism>
<feature type="chain" id="PRO_0000158460" description="Ribose-5-phosphate isomerase A">
    <location>
        <begin position="1"/>
        <end position="219"/>
    </location>
</feature>
<feature type="active site" description="Proton acceptor" evidence="1">
    <location>
        <position position="103"/>
    </location>
</feature>
<feature type="binding site" evidence="1">
    <location>
        <begin position="28"/>
        <end position="31"/>
    </location>
    <ligand>
        <name>substrate</name>
    </ligand>
</feature>
<feature type="binding site" evidence="1">
    <location>
        <begin position="81"/>
        <end position="84"/>
    </location>
    <ligand>
        <name>substrate</name>
    </ligand>
</feature>
<feature type="binding site" evidence="1">
    <location>
        <begin position="94"/>
        <end position="97"/>
    </location>
    <ligand>
        <name>substrate</name>
    </ligand>
</feature>
<feature type="binding site" evidence="1">
    <location>
        <position position="121"/>
    </location>
    <ligand>
        <name>substrate</name>
    </ligand>
</feature>
<keyword id="KW-0413">Isomerase</keyword>
<keyword id="KW-1185">Reference proteome</keyword>
<protein>
    <recommendedName>
        <fullName evidence="1">Ribose-5-phosphate isomerase A</fullName>
        <ecNumber evidence="1">5.3.1.6</ecNumber>
    </recommendedName>
    <alternativeName>
        <fullName evidence="1">Phosphoriboisomerase A</fullName>
        <shortName evidence="1">PRI</shortName>
    </alternativeName>
</protein>
<sequence>MTQDEMKKAAGWAALKYVEKDSIVGVGTGSTVNHFIDALATMKADIEGAVSSSEASTQKMKALGIPVYDLNSVDKLSVYVDGADEINGHMDMIKGGGAALTREKIVAAVAEKFVCIVDNTKQVDILGEFPLPVEVIPMARSYVARQLVKLGGDPVYREGVITDNGNVILDVYNLKILNPKELEDKINAIVGVVTNGLFAKRGADVLLVGTPEGVKTFTA</sequence>
<gene>
    <name evidence="1" type="primary">rpiA</name>
    <name type="ordered locus">SO_1150</name>
</gene>
<reference key="1">
    <citation type="journal article" date="2002" name="Nat. Biotechnol.">
        <title>Genome sequence of the dissimilatory metal ion-reducing bacterium Shewanella oneidensis.</title>
        <authorList>
            <person name="Heidelberg J.F."/>
            <person name="Paulsen I.T."/>
            <person name="Nelson K.E."/>
            <person name="Gaidos E.J."/>
            <person name="Nelson W.C."/>
            <person name="Read T.D."/>
            <person name="Eisen J.A."/>
            <person name="Seshadri R."/>
            <person name="Ward N.L."/>
            <person name="Methe B.A."/>
            <person name="Clayton R.A."/>
            <person name="Meyer T."/>
            <person name="Tsapin A."/>
            <person name="Scott J."/>
            <person name="Beanan M.J."/>
            <person name="Brinkac L.M."/>
            <person name="Daugherty S.C."/>
            <person name="DeBoy R.T."/>
            <person name="Dodson R.J."/>
            <person name="Durkin A.S."/>
            <person name="Haft D.H."/>
            <person name="Kolonay J.F."/>
            <person name="Madupu R."/>
            <person name="Peterson J.D."/>
            <person name="Umayam L.A."/>
            <person name="White O."/>
            <person name="Wolf A.M."/>
            <person name="Vamathevan J.J."/>
            <person name="Weidman J.F."/>
            <person name="Impraim M."/>
            <person name="Lee K."/>
            <person name="Berry K.J."/>
            <person name="Lee C."/>
            <person name="Mueller J."/>
            <person name="Khouri H.M."/>
            <person name="Gill J."/>
            <person name="Utterback T.R."/>
            <person name="McDonald L.A."/>
            <person name="Feldblyum T.V."/>
            <person name="Smith H.O."/>
            <person name="Venter J.C."/>
            <person name="Nealson K.H."/>
            <person name="Fraser C.M."/>
        </authorList>
    </citation>
    <scope>NUCLEOTIDE SEQUENCE [LARGE SCALE GENOMIC DNA]</scope>
    <source>
        <strain>ATCC 700550 / JCM 31522 / CIP 106686 / LMG 19005 / NCIMB 14063 / MR-1</strain>
    </source>
</reference>
<name>RPIA_SHEON</name>
<evidence type="ECO:0000255" key="1">
    <source>
        <dbReference type="HAMAP-Rule" id="MF_00170"/>
    </source>
</evidence>
<comment type="function">
    <text evidence="1">Catalyzes the reversible conversion of ribose-5-phosphate to ribulose 5-phosphate.</text>
</comment>
<comment type="catalytic activity">
    <reaction evidence="1">
        <text>aldehydo-D-ribose 5-phosphate = D-ribulose 5-phosphate</text>
        <dbReference type="Rhea" id="RHEA:14657"/>
        <dbReference type="ChEBI" id="CHEBI:58121"/>
        <dbReference type="ChEBI" id="CHEBI:58273"/>
        <dbReference type="EC" id="5.3.1.6"/>
    </reaction>
</comment>
<comment type="pathway">
    <text evidence="1">Carbohydrate degradation; pentose phosphate pathway; D-ribose 5-phosphate from D-ribulose 5-phosphate (non-oxidative stage): step 1/1.</text>
</comment>
<comment type="subunit">
    <text evidence="1">Homodimer.</text>
</comment>
<comment type="similarity">
    <text evidence="1">Belongs to the ribose 5-phosphate isomerase family.</text>
</comment>
<proteinExistence type="inferred from homology"/>